<evidence type="ECO:0000255" key="1">
    <source>
        <dbReference type="HAMAP-Rule" id="MF_00131"/>
    </source>
</evidence>
<organism>
    <name type="scientific">Brucella abortus (strain S19)</name>
    <dbReference type="NCBI Taxonomy" id="430066"/>
    <lineage>
        <taxon>Bacteria</taxon>
        <taxon>Pseudomonadati</taxon>
        <taxon>Pseudomonadota</taxon>
        <taxon>Alphaproteobacteria</taxon>
        <taxon>Hyphomicrobiales</taxon>
        <taxon>Brucellaceae</taxon>
        <taxon>Brucella/Ochrobactrum group</taxon>
        <taxon>Brucella</taxon>
    </lineage>
</organism>
<name>TRPA_BRUA1</name>
<comment type="function">
    <text evidence="1">The alpha subunit is responsible for the aldol cleavage of indoleglycerol phosphate to indole and glyceraldehyde 3-phosphate.</text>
</comment>
<comment type="catalytic activity">
    <reaction evidence="1">
        <text>(1S,2R)-1-C-(indol-3-yl)glycerol 3-phosphate + L-serine = D-glyceraldehyde 3-phosphate + L-tryptophan + H2O</text>
        <dbReference type="Rhea" id="RHEA:10532"/>
        <dbReference type="ChEBI" id="CHEBI:15377"/>
        <dbReference type="ChEBI" id="CHEBI:33384"/>
        <dbReference type="ChEBI" id="CHEBI:57912"/>
        <dbReference type="ChEBI" id="CHEBI:58866"/>
        <dbReference type="ChEBI" id="CHEBI:59776"/>
        <dbReference type="EC" id="4.2.1.20"/>
    </reaction>
</comment>
<comment type="pathway">
    <text evidence="1">Amino-acid biosynthesis; L-tryptophan biosynthesis; L-tryptophan from chorismate: step 5/5.</text>
</comment>
<comment type="subunit">
    <text evidence="1">Tetramer of two alpha and two beta chains.</text>
</comment>
<comment type="similarity">
    <text evidence="1">Belongs to the TrpA family.</text>
</comment>
<accession>B2S9A3</accession>
<sequence length="279" mass="29486">MTTRIDTKFAELKAEGRPALVTYFMGGDPDLETALKVMKALPKAGADVIELGMPFSDPMADGPAIQAAGLRALNAGQTLAKTLYMAAEFRKEDDTTPIVMMGYYNPIYVYGVERFLTDAKASGVDGLIVVDLPSEMDAELCIPAMKAGINFIRLTTPTTDDKRLPKVLHNSSGFVYYVSMNGITGAAIADTAKVGEAVRHIKKSTDLPICVGFGVKTPEQAAAIATHADSVVVGTAIVNAIAGELDEKGKVKGDPVAAATRLVHALAESVRATRLEAAQ</sequence>
<reference key="1">
    <citation type="journal article" date="2008" name="PLoS ONE">
        <title>Genome sequence of Brucella abortus vaccine strain S19 compared to virulent strains yields candidate virulence genes.</title>
        <authorList>
            <person name="Crasta O.R."/>
            <person name="Folkerts O."/>
            <person name="Fei Z."/>
            <person name="Mane S.P."/>
            <person name="Evans C."/>
            <person name="Martino-Catt S."/>
            <person name="Bricker B."/>
            <person name="Yu G."/>
            <person name="Du L."/>
            <person name="Sobral B.W."/>
        </authorList>
    </citation>
    <scope>NUCLEOTIDE SEQUENCE [LARGE SCALE GENOMIC DNA]</scope>
    <source>
        <strain>S19</strain>
    </source>
</reference>
<keyword id="KW-0028">Amino-acid biosynthesis</keyword>
<keyword id="KW-0057">Aromatic amino acid biosynthesis</keyword>
<keyword id="KW-0456">Lyase</keyword>
<keyword id="KW-0822">Tryptophan biosynthesis</keyword>
<protein>
    <recommendedName>
        <fullName evidence="1">Tryptophan synthase alpha chain</fullName>
        <ecNumber evidence="1">4.2.1.20</ecNumber>
    </recommendedName>
</protein>
<feature type="chain" id="PRO_1000095695" description="Tryptophan synthase alpha chain">
    <location>
        <begin position="1"/>
        <end position="279"/>
    </location>
</feature>
<feature type="active site" description="Proton acceptor" evidence="1">
    <location>
        <position position="50"/>
    </location>
</feature>
<feature type="active site" description="Proton acceptor" evidence="1">
    <location>
        <position position="61"/>
    </location>
</feature>
<dbReference type="EC" id="4.2.1.20" evidence="1"/>
<dbReference type="EMBL" id="CP000887">
    <property type="protein sequence ID" value="ACD73455.1"/>
    <property type="molecule type" value="Genomic_DNA"/>
</dbReference>
<dbReference type="RefSeq" id="WP_002965172.1">
    <property type="nucleotide sequence ID" value="NC_010742.1"/>
</dbReference>
<dbReference type="SMR" id="B2S9A3"/>
<dbReference type="GeneID" id="93017585"/>
<dbReference type="KEGG" id="bmc:BAbS19_I19730"/>
<dbReference type="HOGENOM" id="CLU_016734_0_0_5"/>
<dbReference type="UniPathway" id="UPA00035">
    <property type="reaction ID" value="UER00044"/>
</dbReference>
<dbReference type="Proteomes" id="UP000002565">
    <property type="component" value="Chromosome 1"/>
</dbReference>
<dbReference type="GO" id="GO:0005829">
    <property type="term" value="C:cytosol"/>
    <property type="evidence" value="ECO:0007669"/>
    <property type="project" value="TreeGrafter"/>
</dbReference>
<dbReference type="GO" id="GO:0004834">
    <property type="term" value="F:tryptophan synthase activity"/>
    <property type="evidence" value="ECO:0007669"/>
    <property type="project" value="UniProtKB-UniRule"/>
</dbReference>
<dbReference type="CDD" id="cd04724">
    <property type="entry name" value="Tryptophan_synthase_alpha"/>
    <property type="match status" value="1"/>
</dbReference>
<dbReference type="FunFam" id="3.20.20.70:FF:000037">
    <property type="entry name" value="Tryptophan synthase alpha chain"/>
    <property type="match status" value="1"/>
</dbReference>
<dbReference type="Gene3D" id="3.20.20.70">
    <property type="entry name" value="Aldolase class I"/>
    <property type="match status" value="1"/>
</dbReference>
<dbReference type="HAMAP" id="MF_00131">
    <property type="entry name" value="Trp_synth_alpha"/>
    <property type="match status" value="1"/>
</dbReference>
<dbReference type="InterPro" id="IPR013785">
    <property type="entry name" value="Aldolase_TIM"/>
</dbReference>
<dbReference type="InterPro" id="IPR011060">
    <property type="entry name" value="RibuloseP-bd_barrel"/>
</dbReference>
<dbReference type="InterPro" id="IPR018204">
    <property type="entry name" value="Trp_synthase_alpha_AS"/>
</dbReference>
<dbReference type="InterPro" id="IPR002028">
    <property type="entry name" value="Trp_synthase_suA"/>
</dbReference>
<dbReference type="NCBIfam" id="TIGR00262">
    <property type="entry name" value="trpA"/>
    <property type="match status" value="1"/>
</dbReference>
<dbReference type="PANTHER" id="PTHR43406:SF1">
    <property type="entry name" value="TRYPTOPHAN SYNTHASE ALPHA CHAIN, CHLOROPLASTIC"/>
    <property type="match status" value="1"/>
</dbReference>
<dbReference type="PANTHER" id="PTHR43406">
    <property type="entry name" value="TRYPTOPHAN SYNTHASE, ALPHA CHAIN"/>
    <property type="match status" value="1"/>
</dbReference>
<dbReference type="Pfam" id="PF00290">
    <property type="entry name" value="Trp_syntA"/>
    <property type="match status" value="1"/>
</dbReference>
<dbReference type="SUPFAM" id="SSF51366">
    <property type="entry name" value="Ribulose-phoshate binding barrel"/>
    <property type="match status" value="1"/>
</dbReference>
<dbReference type="PROSITE" id="PS00167">
    <property type="entry name" value="TRP_SYNTHASE_ALPHA"/>
    <property type="match status" value="1"/>
</dbReference>
<gene>
    <name evidence="1" type="primary">trpA</name>
    <name type="ordered locus">BAbS19_I19730</name>
</gene>
<proteinExistence type="inferred from homology"/>